<protein>
    <recommendedName>
        <fullName evidence="3">Protein SLE1</fullName>
    </recommendedName>
    <alternativeName>
        <fullName>Em protein</fullName>
    </alternativeName>
    <alternativeName>
        <fullName evidence="3">Soybean group-1 late embryogenesis abundant protein 1</fullName>
    </alternativeName>
    <alternativeName>
        <fullName evidence="3">Soybean group-1 lea protein 1</fullName>
        <shortName evidence="3">Sle1</shortName>
    </alternativeName>
</protein>
<reference key="1">
    <citation type="journal article" date="1997" name="Theor. Appl. Genet.">
        <title>Cloning, mapping, and analyses of expression of the Em-like gene family in soybean [Glycine max (L). Merr.].</title>
        <authorList>
            <person name="Calvo E.S."/>
            <person name="Wurtle E.S."/>
            <person name="Shoemaker R.C."/>
        </authorList>
    </citation>
    <scope>NUCLEOTIDE SEQUENCE [GENOMIC DNA]</scope>
    <scope>TISSUE SPECIFICITY</scope>
    <scope>DEVELOPMENTAL STAGE</scope>
    <scope>INDUCTION BY DROUGHT</scope>
    <source>
        <strain>cv. Williams 82</strain>
    </source>
</reference>
<reference key="2">
    <citation type="submission" date="2009-08" db="EMBL/GenBank/DDBJ databases">
        <authorList>
            <person name="Cheung F."/>
            <person name="Xiao Y."/>
            <person name="Chan A."/>
            <person name="Moskal W."/>
            <person name="Town C.D."/>
        </authorList>
    </citation>
    <scope>NUCLEOTIDE SEQUENCE [LARGE SCALE MRNA]</scope>
</reference>
<accession>I1N2Z5</accession>
<accession>C6TBB3</accession>
<proteinExistence type="evidence at transcript level"/>
<name>SLE1_SOYBN</name>
<evidence type="ECO:0000256" key="1">
    <source>
        <dbReference type="SAM" id="MobiDB-lite"/>
    </source>
</evidence>
<evidence type="ECO:0000269" key="2">
    <source ref="1"/>
</evidence>
<evidence type="ECO:0000303" key="3">
    <source ref="1"/>
</evidence>
<evidence type="ECO:0000305" key="4"/>
<evidence type="ECO:0000312" key="5">
    <source>
        <dbReference type="Proteomes" id="UP000008827"/>
    </source>
</evidence>
<keyword id="KW-1185">Reference proteome</keyword>
<feature type="chain" id="PRO_0000431229" description="Protein SLE1">
    <location>
        <begin position="1"/>
        <end position="112"/>
    </location>
</feature>
<feature type="region of interest" description="Disordered" evidence="1">
    <location>
        <begin position="1"/>
        <end position="112"/>
    </location>
</feature>
<feature type="compositionally biased region" description="Basic and acidic residues" evidence="1">
    <location>
        <begin position="7"/>
        <end position="17"/>
    </location>
</feature>
<feature type="compositionally biased region" description="Basic and acidic residues" evidence="1">
    <location>
        <begin position="32"/>
        <end position="42"/>
    </location>
</feature>
<feature type="compositionally biased region" description="Polar residues" evidence="1">
    <location>
        <begin position="44"/>
        <end position="53"/>
    </location>
</feature>
<feature type="compositionally biased region" description="Basic and acidic residues" evidence="1">
    <location>
        <begin position="56"/>
        <end position="82"/>
    </location>
</feature>
<feature type="sequence conflict" description="In Ref. 2; ACU19115." ref="2">
    <original>G</original>
    <variation>R</variation>
    <location>
        <position position="94"/>
    </location>
</feature>
<organism evidence="5">
    <name type="scientific">Glycine max</name>
    <name type="common">Soybean</name>
    <name type="synonym">Glycine hispida</name>
    <dbReference type="NCBI Taxonomy" id="3847"/>
    <lineage>
        <taxon>Eukaryota</taxon>
        <taxon>Viridiplantae</taxon>
        <taxon>Streptophyta</taxon>
        <taxon>Embryophyta</taxon>
        <taxon>Tracheophyta</taxon>
        <taxon>Spermatophyta</taxon>
        <taxon>Magnoliopsida</taxon>
        <taxon>eudicotyledons</taxon>
        <taxon>Gunneridae</taxon>
        <taxon>Pentapetalae</taxon>
        <taxon>rosids</taxon>
        <taxon>fabids</taxon>
        <taxon>Fabales</taxon>
        <taxon>Fabaceae</taxon>
        <taxon>Papilionoideae</taxon>
        <taxon>50 kb inversion clade</taxon>
        <taxon>NPAAA clade</taxon>
        <taxon>indigoferoid/millettioid clade</taxon>
        <taxon>Phaseoleae</taxon>
        <taxon>Glycine</taxon>
        <taxon>Glycine subgen. Soja</taxon>
    </lineage>
</organism>
<sequence>MESQQANREELDEKARQGETVVPGGTGGKSLEAQEHLAEGRSRGGQTRKQQLGSEGYHEMGTKGGQTRKEQMGREGYQEMGRKGGLSTMDKSGGERAEEEGIEIDESKFKIT</sequence>
<gene>
    <name evidence="3" type="primary">SLE1</name>
    <name type="ordered locus">Glyma18g43320.1</name>
</gene>
<comment type="tissue specificity">
    <text evidence="2">In seeds, expressed in the embryonic axis and in the cotyledons. Not detected in leaves, stems or roots.</text>
</comment>
<comment type="developmental stage">
    <text evidence="2">Expressed throughout seed development, from 25 days after fertilization (daf) until full maturation and drying at 105 daf. Decreases rapidly after imbibition.</text>
</comment>
<comment type="induction">
    <text evidence="2">Down-regulated by drought in 30 days after fertilization seeds. Not regulated by drought in leaves, cotyledons, hypocotyls and roots.</text>
</comment>
<comment type="similarity">
    <text evidence="4">Belongs to the small hydrophilic plant seed protein family.</text>
</comment>
<dbReference type="EMBL" id="BT094816">
    <property type="protein sequence ID" value="ACU19115.1"/>
    <property type="molecule type" value="mRNA"/>
</dbReference>
<dbReference type="RefSeq" id="NP_001347246.1">
    <property type="nucleotide sequence ID" value="NM_001360317.2"/>
</dbReference>
<dbReference type="RefSeq" id="XP_003552262.1">
    <property type="nucleotide sequence ID" value="XM_003552214.2"/>
</dbReference>
<dbReference type="STRING" id="3847.I1N2Z5"/>
<dbReference type="PaxDb" id="3847-GLYMA18G43320.1"/>
<dbReference type="EnsemblPlants" id="KRH00280">
    <property type="protein sequence ID" value="KRH00280"/>
    <property type="gene ID" value="GLYMA_18G203500"/>
</dbReference>
<dbReference type="GeneID" id="100779693"/>
<dbReference type="Gramene" id="KRH00280">
    <property type="protein sequence ID" value="KRH00280"/>
    <property type="gene ID" value="GLYMA_18G203500"/>
</dbReference>
<dbReference type="eggNOG" id="ENOG502S1DH">
    <property type="taxonomic scope" value="Eukaryota"/>
</dbReference>
<dbReference type="HOGENOM" id="CLU_144393_0_0_1"/>
<dbReference type="InParanoid" id="I1N2Z5"/>
<dbReference type="OMA" id="PRACAHY"/>
<dbReference type="OrthoDB" id="540492at2759"/>
<dbReference type="Proteomes" id="UP000008827">
    <property type="component" value="Chromosome 18"/>
</dbReference>
<dbReference type="GO" id="GO:0009737">
    <property type="term" value="P:response to abscisic acid"/>
    <property type="evidence" value="ECO:0000318"/>
    <property type="project" value="GO_Central"/>
</dbReference>
<dbReference type="InterPro" id="IPR038956">
    <property type="entry name" value="LEA_5"/>
</dbReference>
<dbReference type="InterPro" id="IPR022377">
    <property type="entry name" value="Sm_Hydphi_plant_seed_CS"/>
</dbReference>
<dbReference type="InterPro" id="IPR000389">
    <property type="entry name" value="Small_hydrophilic_seed_prot"/>
</dbReference>
<dbReference type="PANTHER" id="PTHR34671">
    <property type="entry name" value="EM-LIKE PROTEIN GEA1"/>
    <property type="match status" value="1"/>
</dbReference>
<dbReference type="PANTHER" id="PTHR34671:SF11">
    <property type="entry name" value="EM-LIKE PROTEIN GEA1"/>
    <property type="match status" value="1"/>
</dbReference>
<dbReference type="Pfam" id="PF00477">
    <property type="entry name" value="LEA_5"/>
    <property type="match status" value="1"/>
</dbReference>
<dbReference type="PROSITE" id="PS00431">
    <property type="entry name" value="SMALL_HYDR_PLANT_SEED"/>
    <property type="match status" value="1"/>
</dbReference>